<dbReference type="EC" id="2.4.2.29" evidence="1"/>
<dbReference type="EMBL" id="CP000057">
    <property type="protein sequence ID" value="AAX87304.1"/>
    <property type="molecule type" value="Genomic_DNA"/>
</dbReference>
<dbReference type="RefSeq" id="WP_011271940.1">
    <property type="nucleotide sequence ID" value="NC_007146.2"/>
</dbReference>
<dbReference type="SMR" id="Q4QNU3"/>
<dbReference type="KEGG" id="hit:NTHI0350"/>
<dbReference type="HOGENOM" id="CLU_022060_0_1_6"/>
<dbReference type="UniPathway" id="UPA00392"/>
<dbReference type="Proteomes" id="UP000002525">
    <property type="component" value="Chromosome"/>
</dbReference>
<dbReference type="GO" id="GO:0005829">
    <property type="term" value="C:cytosol"/>
    <property type="evidence" value="ECO:0007669"/>
    <property type="project" value="TreeGrafter"/>
</dbReference>
<dbReference type="GO" id="GO:0046872">
    <property type="term" value="F:metal ion binding"/>
    <property type="evidence" value="ECO:0007669"/>
    <property type="project" value="UniProtKB-KW"/>
</dbReference>
<dbReference type="GO" id="GO:0008479">
    <property type="term" value="F:tRNA-guanosine(34) queuine transglycosylase activity"/>
    <property type="evidence" value="ECO:0007669"/>
    <property type="project" value="UniProtKB-UniRule"/>
</dbReference>
<dbReference type="GO" id="GO:0008616">
    <property type="term" value="P:queuosine biosynthetic process"/>
    <property type="evidence" value="ECO:0007669"/>
    <property type="project" value="UniProtKB-UniRule"/>
</dbReference>
<dbReference type="GO" id="GO:0002099">
    <property type="term" value="P:tRNA wobble guanine modification"/>
    <property type="evidence" value="ECO:0007669"/>
    <property type="project" value="TreeGrafter"/>
</dbReference>
<dbReference type="GO" id="GO:0101030">
    <property type="term" value="P:tRNA-guanine transglycosylation"/>
    <property type="evidence" value="ECO:0007669"/>
    <property type="project" value="InterPro"/>
</dbReference>
<dbReference type="FunFam" id="3.20.20.105:FF:000001">
    <property type="entry name" value="Queuine tRNA-ribosyltransferase"/>
    <property type="match status" value="1"/>
</dbReference>
<dbReference type="Gene3D" id="3.20.20.105">
    <property type="entry name" value="Queuine tRNA-ribosyltransferase-like"/>
    <property type="match status" value="1"/>
</dbReference>
<dbReference type="HAMAP" id="MF_00168">
    <property type="entry name" value="Q_tRNA_Tgt"/>
    <property type="match status" value="1"/>
</dbReference>
<dbReference type="InterPro" id="IPR050076">
    <property type="entry name" value="ArchSynthase1/Queuine_TRR"/>
</dbReference>
<dbReference type="InterPro" id="IPR004803">
    <property type="entry name" value="TGT"/>
</dbReference>
<dbReference type="InterPro" id="IPR036511">
    <property type="entry name" value="TGT-like_sf"/>
</dbReference>
<dbReference type="InterPro" id="IPR002616">
    <property type="entry name" value="tRNA_ribo_trans-like"/>
</dbReference>
<dbReference type="NCBIfam" id="TIGR00430">
    <property type="entry name" value="Q_tRNA_tgt"/>
    <property type="match status" value="1"/>
</dbReference>
<dbReference type="NCBIfam" id="TIGR00449">
    <property type="entry name" value="tgt_general"/>
    <property type="match status" value="1"/>
</dbReference>
<dbReference type="PANTHER" id="PTHR46499">
    <property type="entry name" value="QUEUINE TRNA-RIBOSYLTRANSFERASE"/>
    <property type="match status" value="1"/>
</dbReference>
<dbReference type="PANTHER" id="PTHR46499:SF1">
    <property type="entry name" value="QUEUINE TRNA-RIBOSYLTRANSFERASE"/>
    <property type="match status" value="1"/>
</dbReference>
<dbReference type="Pfam" id="PF01702">
    <property type="entry name" value="TGT"/>
    <property type="match status" value="1"/>
</dbReference>
<dbReference type="SUPFAM" id="SSF51713">
    <property type="entry name" value="tRNA-guanine transglycosylase"/>
    <property type="match status" value="1"/>
</dbReference>
<name>TGT_HAEI8</name>
<sequence>MKYELDKTSGNARRGRLVFERPQGTFSVETPAFMPVGTYGTVKGMTPEEVRATGAEILLGNTFHLWLRPGQEIMRKHGDLHDFMQWHRPILTDSGGFQVFSLGKLRKITEEGVKFQNPINGERIFLSPEKSMEIQYDLGSDIVMIFDECTPYPATFDYAKKSMEMSLRWAKRSHDRFDELGNKNALFGIIQGGVFEELRKVSLEGLVNIGFDGYAVGGLAVGEPKEDMHRILEYICPQIPADKPRYLMGVGKPEDLVEGVRRGIDMFDCVMPTRNARNGHLFVTDGIVKIRNAKYRDDTSPLDPECDCYTCKNYTKAYLYHLDKCGEILGARLNTIHNLRYYQRLMAEIRQAIEDDRFDDFVVEFYARMGKPVPPLQLADNS</sequence>
<keyword id="KW-0328">Glycosyltransferase</keyword>
<keyword id="KW-0479">Metal-binding</keyword>
<keyword id="KW-0671">Queuosine biosynthesis</keyword>
<keyword id="KW-0808">Transferase</keyword>
<keyword id="KW-0819">tRNA processing</keyword>
<keyword id="KW-0862">Zinc</keyword>
<feature type="chain" id="PRO_1000016798" description="Queuine tRNA-ribosyltransferase">
    <location>
        <begin position="1"/>
        <end position="382"/>
    </location>
</feature>
<feature type="region of interest" description="RNA binding" evidence="1">
    <location>
        <begin position="249"/>
        <end position="255"/>
    </location>
</feature>
<feature type="region of interest" description="RNA binding; important for wobble base 34 recognition" evidence="1">
    <location>
        <begin position="273"/>
        <end position="277"/>
    </location>
</feature>
<feature type="active site" description="Proton acceptor" evidence="1">
    <location>
        <position position="93"/>
    </location>
</feature>
<feature type="active site" description="Nucleophile" evidence="1">
    <location>
        <position position="268"/>
    </location>
</feature>
<feature type="binding site" evidence="1">
    <location>
        <begin position="93"/>
        <end position="97"/>
    </location>
    <ligand>
        <name>substrate</name>
    </ligand>
</feature>
<feature type="binding site" evidence="1">
    <location>
        <position position="147"/>
    </location>
    <ligand>
        <name>substrate</name>
    </ligand>
</feature>
<feature type="binding site" evidence="1">
    <location>
        <position position="191"/>
    </location>
    <ligand>
        <name>substrate</name>
    </ligand>
</feature>
<feature type="binding site" evidence="1">
    <location>
        <position position="218"/>
    </location>
    <ligand>
        <name>substrate</name>
    </ligand>
</feature>
<feature type="binding site" evidence="1">
    <location>
        <position position="306"/>
    </location>
    <ligand>
        <name>Zn(2+)</name>
        <dbReference type="ChEBI" id="CHEBI:29105"/>
    </ligand>
</feature>
<feature type="binding site" evidence="1">
    <location>
        <position position="308"/>
    </location>
    <ligand>
        <name>Zn(2+)</name>
        <dbReference type="ChEBI" id="CHEBI:29105"/>
    </ligand>
</feature>
<feature type="binding site" evidence="1">
    <location>
        <position position="311"/>
    </location>
    <ligand>
        <name>Zn(2+)</name>
        <dbReference type="ChEBI" id="CHEBI:29105"/>
    </ligand>
</feature>
<feature type="binding site" evidence="1">
    <location>
        <position position="337"/>
    </location>
    <ligand>
        <name>Zn(2+)</name>
        <dbReference type="ChEBI" id="CHEBI:29105"/>
    </ligand>
</feature>
<evidence type="ECO:0000255" key="1">
    <source>
        <dbReference type="HAMAP-Rule" id="MF_00168"/>
    </source>
</evidence>
<proteinExistence type="inferred from homology"/>
<comment type="function">
    <text evidence="1">Catalyzes the base-exchange of a guanine (G) residue with the queuine precursor 7-aminomethyl-7-deazaguanine (PreQ1) at position 34 (anticodon wobble position) in tRNAs with GU(N) anticodons (tRNA-Asp, -Asn, -His and -Tyr). Catalysis occurs through a double-displacement mechanism. The nucleophile active site attacks the C1' of nucleotide 34 to detach the guanine base from the RNA, forming a covalent enzyme-RNA intermediate. The proton acceptor active site deprotonates the incoming PreQ1, allowing a nucleophilic attack on the C1' of the ribose to form the product. After dissociation, two additional enzymatic reactions on the tRNA convert PreQ1 to queuine (Q), resulting in the hypermodified nucleoside queuosine (7-(((4,5-cis-dihydroxy-2-cyclopenten-1-yl)amino)methyl)-7-deazaguanosine).</text>
</comment>
<comment type="catalytic activity">
    <reaction evidence="1">
        <text>7-aminomethyl-7-carbaguanine + guanosine(34) in tRNA = 7-aminomethyl-7-carbaguanosine(34) in tRNA + guanine</text>
        <dbReference type="Rhea" id="RHEA:24104"/>
        <dbReference type="Rhea" id="RHEA-COMP:10341"/>
        <dbReference type="Rhea" id="RHEA-COMP:10342"/>
        <dbReference type="ChEBI" id="CHEBI:16235"/>
        <dbReference type="ChEBI" id="CHEBI:58703"/>
        <dbReference type="ChEBI" id="CHEBI:74269"/>
        <dbReference type="ChEBI" id="CHEBI:82833"/>
        <dbReference type="EC" id="2.4.2.29"/>
    </reaction>
</comment>
<comment type="cofactor">
    <cofactor evidence="1">
        <name>Zn(2+)</name>
        <dbReference type="ChEBI" id="CHEBI:29105"/>
    </cofactor>
    <text evidence="1">Binds 1 zinc ion per subunit.</text>
</comment>
<comment type="pathway">
    <text evidence="1">tRNA modification; tRNA-queuosine biosynthesis.</text>
</comment>
<comment type="subunit">
    <text evidence="1">Homodimer. Within each dimer, one monomer is responsible for RNA recognition and catalysis, while the other monomer binds to the replacement base PreQ1.</text>
</comment>
<comment type="similarity">
    <text evidence="1">Belongs to the queuine tRNA-ribosyltransferase family.</text>
</comment>
<organism>
    <name type="scientific">Haemophilus influenzae (strain 86-028NP)</name>
    <dbReference type="NCBI Taxonomy" id="281310"/>
    <lineage>
        <taxon>Bacteria</taxon>
        <taxon>Pseudomonadati</taxon>
        <taxon>Pseudomonadota</taxon>
        <taxon>Gammaproteobacteria</taxon>
        <taxon>Pasteurellales</taxon>
        <taxon>Pasteurellaceae</taxon>
        <taxon>Haemophilus</taxon>
    </lineage>
</organism>
<reference key="1">
    <citation type="journal article" date="2005" name="J. Bacteriol.">
        <title>Genomic sequence of an otitis media isolate of nontypeable Haemophilus influenzae: comparative study with H. influenzae serotype d, strain KW20.</title>
        <authorList>
            <person name="Harrison A."/>
            <person name="Dyer D.W."/>
            <person name="Gillaspy A."/>
            <person name="Ray W.C."/>
            <person name="Mungur R."/>
            <person name="Carson M.B."/>
            <person name="Zhong H."/>
            <person name="Gipson J."/>
            <person name="Gipson M."/>
            <person name="Johnson L.S."/>
            <person name="Lewis L."/>
            <person name="Bakaletz L.O."/>
            <person name="Munson R.S. Jr."/>
        </authorList>
    </citation>
    <scope>NUCLEOTIDE SEQUENCE [LARGE SCALE GENOMIC DNA]</scope>
    <source>
        <strain>86-028NP</strain>
    </source>
</reference>
<gene>
    <name evidence="1" type="primary">tgt</name>
    <name type="ordered locus">NTHI0350</name>
</gene>
<accession>Q4QNU3</accession>
<protein>
    <recommendedName>
        <fullName evidence="1">Queuine tRNA-ribosyltransferase</fullName>
        <ecNumber evidence="1">2.4.2.29</ecNumber>
    </recommendedName>
    <alternativeName>
        <fullName evidence="1">Guanine insertion enzyme</fullName>
    </alternativeName>
    <alternativeName>
        <fullName evidence="1">tRNA-guanine transglycosylase</fullName>
    </alternativeName>
</protein>